<proteinExistence type="inferred from homology"/>
<feature type="chain" id="PRO_0000351962" description="Protein-L-isoaspartate O-methyltransferase">
    <location>
        <begin position="1"/>
        <end position="208"/>
    </location>
</feature>
<feature type="active site" evidence="1">
    <location>
        <position position="59"/>
    </location>
</feature>
<reference key="1">
    <citation type="journal article" date="2010" name="J. Bacteriol.">
        <title>Genome sequence of the deep-rooted Yersinia pestis strain Angola reveals new insights into the evolution and pangenome of the plague bacterium.</title>
        <authorList>
            <person name="Eppinger M."/>
            <person name="Worsham P.L."/>
            <person name="Nikolich M.P."/>
            <person name="Riley D.R."/>
            <person name="Sebastian Y."/>
            <person name="Mou S."/>
            <person name="Achtman M."/>
            <person name="Lindler L.E."/>
            <person name="Ravel J."/>
        </authorList>
    </citation>
    <scope>NUCLEOTIDE SEQUENCE [LARGE SCALE GENOMIC DNA]</scope>
    <source>
        <strain>Angola</strain>
    </source>
</reference>
<comment type="function">
    <text evidence="1">Catalyzes the methyl esterification of L-isoaspartyl residues in peptides and proteins that result from spontaneous decomposition of normal L-aspartyl and L-asparaginyl residues. It plays a role in the repair and/or degradation of damaged proteins.</text>
</comment>
<comment type="catalytic activity">
    <reaction evidence="1">
        <text>[protein]-L-isoaspartate + S-adenosyl-L-methionine = [protein]-L-isoaspartate alpha-methyl ester + S-adenosyl-L-homocysteine</text>
        <dbReference type="Rhea" id="RHEA:12705"/>
        <dbReference type="Rhea" id="RHEA-COMP:12143"/>
        <dbReference type="Rhea" id="RHEA-COMP:12144"/>
        <dbReference type="ChEBI" id="CHEBI:57856"/>
        <dbReference type="ChEBI" id="CHEBI:59789"/>
        <dbReference type="ChEBI" id="CHEBI:90596"/>
        <dbReference type="ChEBI" id="CHEBI:90598"/>
        <dbReference type="EC" id="2.1.1.77"/>
    </reaction>
</comment>
<comment type="subcellular location">
    <subcellularLocation>
        <location evidence="1">Cytoplasm</location>
    </subcellularLocation>
</comment>
<comment type="similarity">
    <text evidence="1">Belongs to the methyltransferase superfamily. L-isoaspartyl/D-aspartyl protein methyltransferase family.</text>
</comment>
<evidence type="ECO:0000255" key="1">
    <source>
        <dbReference type="HAMAP-Rule" id="MF_00090"/>
    </source>
</evidence>
<gene>
    <name evidence="1" type="primary">pcm</name>
    <name type="ordered locus">YpAngola_A0960</name>
</gene>
<name>PIMT_YERPG</name>
<dbReference type="EC" id="2.1.1.77" evidence="1"/>
<dbReference type="EMBL" id="CP000901">
    <property type="protein sequence ID" value="ABX85296.1"/>
    <property type="molecule type" value="Genomic_DNA"/>
</dbReference>
<dbReference type="RefSeq" id="WP_002209395.1">
    <property type="nucleotide sequence ID" value="NZ_CP009935.1"/>
</dbReference>
<dbReference type="SMR" id="A9R115"/>
<dbReference type="KEGG" id="ypg:YpAngola_A0960"/>
<dbReference type="PATRIC" id="fig|349746.12.peg.1908"/>
<dbReference type="GO" id="GO:0005737">
    <property type="term" value="C:cytoplasm"/>
    <property type="evidence" value="ECO:0007669"/>
    <property type="project" value="UniProtKB-SubCell"/>
</dbReference>
<dbReference type="GO" id="GO:0004719">
    <property type="term" value="F:protein-L-isoaspartate (D-aspartate) O-methyltransferase activity"/>
    <property type="evidence" value="ECO:0007669"/>
    <property type="project" value="UniProtKB-UniRule"/>
</dbReference>
<dbReference type="GO" id="GO:0032259">
    <property type="term" value="P:methylation"/>
    <property type="evidence" value="ECO:0007669"/>
    <property type="project" value="UniProtKB-KW"/>
</dbReference>
<dbReference type="GO" id="GO:0036211">
    <property type="term" value="P:protein modification process"/>
    <property type="evidence" value="ECO:0007669"/>
    <property type="project" value="UniProtKB-UniRule"/>
</dbReference>
<dbReference type="GO" id="GO:0030091">
    <property type="term" value="P:protein repair"/>
    <property type="evidence" value="ECO:0007669"/>
    <property type="project" value="UniProtKB-UniRule"/>
</dbReference>
<dbReference type="CDD" id="cd02440">
    <property type="entry name" value="AdoMet_MTases"/>
    <property type="match status" value="1"/>
</dbReference>
<dbReference type="FunFam" id="3.40.50.150:FF:000010">
    <property type="entry name" value="Protein-L-isoaspartate O-methyltransferase"/>
    <property type="match status" value="1"/>
</dbReference>
<dbReference type="Gene3D" id="3.40.50.150">
    <property type="entry name" value="Vaccinia Virus protein VP39"/>
    <property type="match status" value="1"/>
</dbReference>
<dbReference type="HAMAP" id="MF_00090">
    <property type="entry name" value="PIMT"/>
    <property type="match status" value="1"/>
</dbReference>
<dbReference type="InterPro" id="IPR000682">
    <property type="entry name" value="PCMT"/>
</dbReference>
<dbReference type="InterPro" id="IPR029063">
    <property type="entry name" value="SAM-dependent_MTases_sf"/>
</dbReference>
<dbReference type="NCBIfam" id="TIGR00080">
    <property type="entry name" value="pimt"/>
    <property type="match status" value="1"/>
</dbReference>
<dbReference type="NCBIfam" id="NF001453">
    <property type="entry name" value="PRK00312.1"/>
    <property type="match status" value="1"/>
</dbReference>
<dbReference type="PANTHER" id="PTHR11579">
    <property type="entry name" value="PROTEIN-L-ISOASPARTATE O-METHYLTRANSFERASE"/>
    <property type="match status" value="1"/>
</dbReference>
<dbReference type="PANTHER" id="PTHR11579:SF0">
    <property type="entry name" value="PROTEIN-L-ISOASPARTATE(D-ASPARTATE) O-METHYLTRANSFERASE"/>
    <property type="match status" value="1"/>
</dbReference>
<dbReference type="Pfam" id="PF01135">
    <property type="entry name" value="PCMT"/>
    <property type="match status" value="1"/>
</dbReference>
<dbReference type="SUPFAM" id="SSF53335">
    <property type="entry name" value="S-adenosyl-L-methionine-dependent methyltransferases"/>
    <property type="match status" value="1"/>
</dbReference>
<dbReference type="PROSITE" id="PS01279">
    <property type="entry name" value="PCMT"/>
    <property type="match status" value="1"/>
</dbReference>
<organism>
    <name type="scientific">Yersinia pestis bv. Antiqua (strain Angola)</name>
    <dbReference type="NCBI Taxonomy" id="349746"/>
    <lineage>
        <taxon>Bacteria</taxon>
        <taxon>Pseudomonadati</taxon>
        <taxon>Pseudomonadota</taxon>
        <taxon>Gammaproteobacteria</taxon>
        <taxon>Enterobacterales</taxon>
        <taxon>Yersiniaceae</taxon>
        <taxon>Yersinia</taxon>
    </lineage>
</organism>
<keyword id="KW-0963">Cytoplasm</keyword>
<keyword id="KW-0489">Methyltransferase</keyword>
<keyword id="KW-0949">S-adenosyl-L-methionine</keyword>
<keyword id="KW-0808">Transferase</keyword>
<accession>A9R115</accession>
<sequence length="208" mass="23432">MVNKRMQTLLMQLRQQGIHDERLLQAIEAVPRERFVDEALAHKAYENTALPIGAGQTISQPYMVARMTELLQLTPTSRVLEIGTGSGYQTAILAHLVDHVCSVERIKGLQWQAKRRLKQLDLHNVSTRHGDGWLGWQSRGPFDAIIVTAAPPEIPDALLEQLDEGGILVLPVGEQFQTLKYVQRRNNEYHIETVEAVRFVPLVKGELA</sequence>
<protein>
    <recommendedName>
        <fullName evidence="1">Protein-L-isoaspartate O-methyltransferase</fullName>
        <ecNumber evidence="1">2.1.1.77</ecNumber>
    </recommendedName>
    <alternativeName>
        <fullName evidence="1">L-isoaspartyl protein carboxyl methyltransferase</fullName>
    </alternativeName>
    <alternativeName>
        <fullName evidence="1">Protein L-isoaspartyl methyltransferase</fullName>
    </alternativeName>
    <alternativeName>
        <fullName evidence="1">Protein-beta-aspartate methyltransferase</fullName>
        <shortName evidence="1">PIMT</shortName>
    </alternativeName>
</protein>